<dbReference type="EC" id="2.7.1.237" evidence="1"/>
<dbReference type="EMBL" id="CP000077">
    <property type="protein sequence ID" value="AAY80203.1"/>
    <property type="molecule type" value="Genomic_DNA"/>
</dbReference>
<dbReference type="RefSeq" id="WP_011277705.1">
    <property type="nucleotide sequence ID" value="NC_007181.1"/>
</dbReference>
<dbReference type="SMR" id="Q4JAH6"/>
<dbReference type="STRING" id="330779.Saci_0836"/>
<dbReference type="GeneID" id="14551349"/>
<dbReference type="KEGG" id="sai:Saci_0836"/>
<dbReference type="PATRIC" id="fig|330779.12.peg.800"/>
<dbReference type="eggNOG" id="arCOG04076">
    <property type="taxonomic scope" value="Archaea"/>
</dbReference>
<dbReference type="HOGENOM" id="CLU_120795_1_0_2"/>
<dbReference type="UniPathway" id="UPA00241"/>
<dbReference type="Proteomes" id="UP000001018">
    <property type="component" value="Chromosome"/>
</dbReference>
<dbReference type="GO" id="GO:0005525">
    <property type="term" value="F:GTP binding"/>
    <property type="evidence" value="ECO:0007669"/>
    <property type="project" value="UniProtKB-UniRule"/>
</dbReference>
<dbReference type="GO" id="GO:0016301">
    <property type="term" value="F:kinase activity"/>
    <property type="evidence" value="ECO:0007669"/>
    <property type="project" value="UniProtKB-UniRule"/>
</dbReference>
<dbReference type="GO" id="GO:0015937">
    <property type="term" value="P:coenzyme A biosynthetic process"/>
    <property type="evidence" value="ECO:0007669"/>
    <property type="project" value="UniProtKB-UniRule"/>
</dbReference>
<dbReference type="HAMAP" id="MF_00590">
    <property type="entry name" value="Dephospho_CoA_kinase_GTP_dep"/>
    <property type="match status" value="1"/>
</dbReference>
<dbReference type="InterPro" id="IPR007164">
    <property type="entry name" value="GTP-dep_dephospho-CoA_kin"/>
</dbReference>
<dbReference type="PANTHER" id="PTHR40732:SF1">
    <property type="entry name" value="GTP-DEPENDENT DEPHOSPHO-COA KINASE"/>
    <property type="match status" value="1"/>
</dbReference>
<dbReference type="PANTHER" id="PTHR40732">
    <property type="entry name" value="UPF0218 PROTEIN TK1697"/>
    <property type="match status" value="1"/>
</dbReference>
<dbReference type="Pfam" id="PF04019">
    <property type="entry name" value="DUF359"/>
    <property type="match status" value="1"/>
</dbReference>
<dbReference type="PIRSF" id="PIRSF006533">
    <property type="entry name" value="UCP006533"/>
    <property type="match status" value="1"/>
</dbReference>
<comment type="function">
    <text evidence="1">Catalyzes the GTP-dependent phosphorylation of the 3'-hydroxyl group of dephosphocoenzyme A to form coenzyme A (CoA).</text>
</comment>
<comment type="catalytic activity">
    <reaction evidence="1">
        <text>3'-dephospho-CoA + GTP = GDP + CoA + H(+)</text>
        <dbReference type="Rhea" id="RHEA:61156"/>
        <dbReference type="ChEBI" id="CHEBI:15378"/>
        <dbReference type="ChEBI" id="CHEBI:37565"/>
        <dbReference type="ChEBI" id="CHEBI:57287"/>
        <dbReference type="ChEBI" id="CHEBI:57328"/>
        <dbReference type="ChEBI" id="CHEBI:58189"/>
        <dbReference type="EC" id="2.7.1.237"/>
    </reaction>
</comment>
<comment type="pathway">
    <text evidence="1">Cofactor biosynthesis; coenzyme A biosynthesis.</text>
</comment>
<comment type="similarity">
    <text evidence="1">Belongs to the GTP-dependent DPCK family.</text>
</comment>
<keyword id="KW-0173">Coenzyme A biosynthesis</keyword>
<keyword id="KW-0342">GTP-binding</keyword>
<keyword id="KW-0418">Kinase</keyword>
<keyword id="KW-0547">Nucleotide-binding</keyword>
<keyword id="KW-1185">Reference proteome</keyword>
<keyword id="KW-0808">Transferase</keyword>
<name>DPCKG_SULAC</name>
<evidence type="ECO:0000255" key="1">
    <source>
        <dbReference type="HAMAP-Rule" id="MF_00590"/>
    </source>
</evidence>
<accession>Q4JAH6</accession>
<gene>
    <name type="ordered locus">Saci_0836</name>
</gene>
<reference key="1">
    <citation type="journal article" date="2005" name="J. Bacteriol.">
        <title>The genome of Sulfolobus acidocaldarius, a model organism of the Crenarchaeota.</title>
        <authorList>
            <person name="Chen L."/>
            <person name="Bruegger K."/>
            <person name="Skovgaard M."/>
            <person name="Redder P."/>
            <person name="She Q."/>
            <person name="Torarinsson E."/>
            <person name="Greve B."/>
            <person name="Awayez M."/>
            <person name="Zibat A."/>
            <person name="Klenk H.-P."/>
            <person name="Garrett R.A."/>
        </authorList>
    </citation>
    <scope>NUCLEOTIDE SEQUENCE [LARGE SCALE GENOMIC DNA]</scope>
    <source>
        <strain>ATCC 33909 / DSM 639 / JCM 8929 / NBRC 15157 / NCIMB 11770</strain>
    </source>
</reference>
<sequence length="164" mass="18788">MPRSLRAELSKPYGVLFINENKLKQFLINKSNSRLITVGDVVTQTILKFHIKPFLAIVDGKTKRKLVKENFGQFEYIKVKNEPGLIRLSTIREIKDILVHNENDKILMVDGEEDLLVIPVVIYGNFGDIIIYGQPNAGVVVTLNNDFLKRRVLEIFKKFQVTSC</sequence>
<feature type="chain" id="PRO_0000137618" description="GTP-dependent dephospho-CoA kinase">
    <location>
        <begin position="1"/>
        <end position="164"/>
    </location>
</feature>
<feature type="binding site" evidence="1">
    <location>
        <position position="40"/>
    </location>
    <ligand>
        <name>GTP</name>
        <dbReference type="ChEBI" id="CHEBI:37565"/>
    </ligand>
</feature>
<feature type="binding site" evidence="1">
    <location>
        <position position="41"/>
    </location>
    <ligand>
        <name>GTP</name>
        <dbReference type="ChEBI" id="CHEBI:37565"/>
    </ligand>
</feature>
<feature type="binding site" evidence="1">
    <location>
        <position position="42"/>
    </location>
    <ligand>
        <name>GTP</name>
        <dbReference type="ChEBI" id="CHEBI:37565"/>
    </ligand>
</feature>
<feature type="binding site" evidence="1">
    <location>
        <position position="59"/>
    </location>
    <ligand>
        <name>GTP</name>
        <dbReference type="ChEBI" id="CHEBI:37565"/>
    </ligand>
</feature>
<feature type="binding site" evidence="1">
    <location>
        <position position="61"/>
    </location>
    <ligand>
        <name>GTP</name>
        <dbReference type="ChEBI" id="CHEBI:37565"/>
    </ligand>
</feature>
<feature type="binding site" evidence="1">
    <location>
        <position position="113"/>
    </location>
    <ligand>
        <name>GTP</name>
        <dbReference type="ChEBI" id="CHEBI:37565"/>
    </ligand>
</feature>
<protein>
    <recommendedName>
        <fullName evidence="1">GTP-dependent dephospho-CoA kinase</fullName>
        <ecNumber evidence="1">2.7.1.237</ecNumber>
    </recommendedName>
    <alternativeName>
        <fullName evidence="1">Dephospho-coenzyme A kinase</fullName>
        <shortName evidence="1">DPCK</shortName>
    </alternativeName>
</protein>
<organism>
    <name type="scientific">Sulfolobus acidocaldarius (strain ATCC 33909 / DSM 639 / JCM 8929 / NBRC 15157 / NCIMB 11770)</name>
    <dbReference type="NCBI Taxonomy" id="330779"/>
    <lineage>
        <taxon>Archaea</taxon>
        <taxon>Thermoproteota</taxon>
        <taxon>Thermoprotei</taxon>
        <taxon>Sulfolobales</taxon>
        <taxon>Sulfolobaceae</taxon>
        <taxon>Sulfolobus</taxon>
    </lineage>
</organism>
<proteinExistence type="inferred from homology"/>